<accession>Q54WM4</accession>
<reference key="1">
    <citation type="journal article" date="2005" name="Nature">
        <title>The genome of the social amoeba Dictyostelium discoideum.</title>
        <authorList>
            <person name="Eichinger L."/>
            <person name="Pachebat J.A."/>
            <person name="Gloeckner G."/>
            <person name="Rajandream M.A."/>
            <person name="Sucgang R."/>
            <person name="Berriman M."/>
            <person name="Song J."/>
            <person name="Olsen R."/>
            <person name="Szafranski K."/>
            <person name="Xu Q."/>
            <person name="Tunggal B."/>
            <person name="Kummerfeld S."/>
            <person name="Madera M."/>
            <person name="Konfortov B.A."/>
            <person name="Rivero F."/>
            <person name="Bankier A.T."/>
            <person name="Lehmann R."/>
            <person name="Hamlin N."/>
            <person name="Davies R."/>
            <person name="Gaudet P."/>
            <person name="Fey P."/>
            <person name="Pilcher K."/>
            <person name="Chen G."/>
            <person name="Saunders D."/>
            <person name="Sodergren E.J."/>
            <person name="Davis P."/>
            <person name="Kerhornou A."/>
            <person name="Nie X."/>
            <person name="Hall N."/>
            <person name="Anjard C."/>
            <person name="Hemphill L."/>
            <person name="Bason N."/>
            <person name="Farbrother P."/>
            <person name="Desany B."/>
            <person name="Just E."/>
            <person name="Morio T."/>
            <person name="Rost R."/>
            <person name="Churcher C.M."/>
            <person name="Cooper J."/>
            <person name="Haydock S."/>
            <person name="van Driessche N."/>
            <person name="Cronin A."/>
            <person name="Goodhead I."/>
            <person name="Muzny D.M."/>
            <person name="Mourier T."/>
            <person name="Pain A."/>
            <person name="Lu M."/>
            <person name="Harper D."/>
            <person name="Lindsay R."/>
            <person name="Hauser H."/>
            <person name="James K.D."/>
            <person name="Quiles M."/>
            <person name="Madan Babu M."/>
            <person name="Saito T."/>
            <person name="Buchrieser C."/>
            <person name="Wardroper A."/>
            <person name="Felder M."/>
            <person name="Thangavelu M."/>
            <person name="Johnson D."/>
            <person name="Knights A."/>
            <person name="Loulseged H."/>
            <person name="Mungall K.L."/>
            <person name="Oliver K."/>
            <person name="Price C."/>
            <person name="Quail M.A."/>
            <person name="Urushihara H."/>
            <person name="Hernandez J."/>
            <person name="Rabbinowitsch E."/>
            <person name="Steffen D."/>
            <person name="Sanders M."/>
            <person name="Ma J."/>
            <person name="Kohara Y."/>
            <person name="Sharp S."/>
            <person name="Simmonds M.N."/>
            <person name="Spiegler S."/>
            <person name="Tivey A."/>
            <person name="Sugano S."/>
            <person name="White B."/>
            <person name="Walker D."/>
            <person name="Woodward J.R."/>
            <person name="Winckler T."/>
            <person name="Tanaka Y."/>
            <person name="Shaulsky G."/>
            <person name="Schleicher M."/>
            <person name="Weinstock G.M."/>
            <person name="Rosenthal A."/>
            <person name="Cox E.C."/>
            <person name="Chisholm R.L."/>
            <person name="Gibbs R.A."/>
            <person name="Loomis W.F."/>
            <person name="Platzer M."/>
            <person name="Kay R.R."/>
            <person name="Williams J.G."/>
            <person name="Dear P.H."/>
            <person name="Noegel A.A."/>
            <person name="Barrell B.G."/>
            <person name="Kuspa A."/>
        </authorList>
    </citation>
    <scope>NUCLEOTIDE SEQUENCE [LARGE SCALE GENOMIC DNA]</scope>
    <source>
        <strain>AX4</strain>
    </source>
</reference>
<comment type="function">
    <text evidence="1">RNA-binding component of the eukaryotic translation initiation factor 3 (eIF-3) complex, which is involved in protein synthesis of a specialized repertoire of mRNAs and, together with other initiation factors, stimulates binding of mRNA and methionyl-tRNAi to the 40S ribosome. The eIF-3 complex specifically targets and initiates translation of a subset of mRNAs involved in cell proliferation. This subunit can bind 18S rRNA.</text>
</comment>
<comment type="subunit">
    <text evidence="1">Component of the eukaryotic translation initiation factor 3 (eIF-3) complex.</text>
</comment>
<comment type="subcellular location">
    <subcellularLocation>
        <location evidence="1">Cytoplasm</location>
    </subcellularLocation>
</comment>
<comment type="similarity">
    <text evidence="1">Belongs to the eIF-3 subunit G family.</text>
</comment>
<feature type="chain" id="PRO_0000330325" description="Eukaryotic translation initiation factor 3 subunit G">
    <location>
        <begin position="1"/>
        <end position="233"/>
    </location>
</feature>
<feature type="domain" description="RRM" evidence="1">
    <location>
        <begin position="152"/>
        <end position="229"/>
    </location>
</feature>
<evidence type="ECO:0000255" key="1">
    <source>
        <dbReference type="HAMAP-Rule" id="MF_03006"/>
    </source>
</evidence>
<gene>
    <name type="primary">eif3G</name>
    <name type="synonym">eif3s4</name>
    <name type="ORF">DDB_G0279549</name>
</gene>
<protein>
    <recommendedName>
        <fullName evidence="1">Eukaryotic translation initiation factor 3 subunit G</fullName>
        <shortName evidence="1">eIF3g</shortName>
    </recommendedName>
    <alternativeName>
        <fullName evidence="1">Eukaryotic translation initiation factor 3 RNA-binding subunit</fullName>
        <shortName evidence="1">eIF-3 RNA-binding subunit</shortName>
    </alternativeName>
    <alternativeName>
        <fullName evidence="1">Eukaryotic translation initiation factor 3 subunit 4</fullName>
    </alternativeName>
</protein>
<dbReference type="EMBL" id="AAFI02000031">
    <property type="protein sequence ID" value="EAL67713.1"/>
    <property type="molecule type" value="Genomic_DNA"/>
</dbReference>
<dbReference type="RefSeq" id="XP_641693.1">
    <property type="nucleotide sequence ID" value="XM_636601.1"/>
</dbReference>
<dbReference type="SMR" id="Q54WM4"/>
<dbReference type="FunCoup" id="Q54WM4">
    <property type="interactions" value="740"/>
</dbReference>
<dbReference type="STRING" id="44689.Q54WM4"/>
<dbReference type="PaxDb" id="44689-DDB0233922"/>
<dbReference type="EnsemblProtists" id="EAL67713">
    <property type="protein sequence ID" value="EAL67713"/>
    <property type="gene ID" value="DDB_G0279549"/>
</dbReference>
<dbReference type="GeneID" id="8622102"/>
<dbReference type="KEGG" id="ddi:DDB_G0279549"/>
<dbReference type="dictyBase" id="DDB_G0279549">
    <property type="gene designation" value="eif3G"/>
</dbReference>
<dbReference type="VEuPathDB" id="AmoebaDB:DDB_G0279549"/>
<dbReference type="eggNOG" id="KOG0122">
    <property type="taxonomic scope" value="Eukaryota"/>
</dbReference>
<dbReference type="HOGENOM" id="CLU_034595_0_0_1"/>
<dbReference type="InParanoid" id="Q54WM4"/>
<dbReference type="OMA" id="ICQGDHF"/>
<dbReference type="PhylomeDB" id="Q54WM4"/>
<dbReference type="Reactome" id="R-DDI-156827">
    <property type="pathway name" value="L13a-mediated translational silencing of Ceruloplasmin expression"/>
</dbReference>
<dbReference type="Reactome" id="R-DDI-72689">
    <property type="pathway name" value="Formation of a pool of free 40S subunits"/>
</dbReference>
<dbReference type="Reactome" id="R-DDI-72695">
    <property type="pathway name" value="Formation of the ternary complex, and subsequently, the 43S complex"/>
</dbReference>
<dbReference type="Reactome" id="R-DDI-72702">
    <property type="pathway name" value="Ribosomal scanning and start codon recognition"/>
</dbReference>
<dbReference type="PRO" id="PR:Q54WM4"/>
<dbReference type="Proteomes" id="UP000002195">
    <property type="component" value="Chromosome 3"/>
</dbReference>
<dbReference type="GO" id="GO:0016282">
    <property type="term" value="C:eukaryotic 43S preinitiation complex"/>
    <property type="evidence" value="ECO:0007669"/>
    <property type="project" value="UniProtKB-UniRule"/>
</dbReference>
<dbReference type="GO" id="GO:0033290">
    <property type="term" value="C:eukaryotic 48S preinitiation complex"/>
    <property type="evidence" value="ECO:0007669"/>
    <property type="project" value="UniProtKB-UniRule"/>
</dbReference>
<dbReference type="GO" id="GO:0005852">
    <property type="term" value="C:eukaryotic translation initiation factor 3 complex"/>
    <property type="evidence" value="ECO:0000250"/>
    <property type="project" value="dictyBase"/>
</dbReference>
<dbReference type="GO" id="GO:0003723">
    <property type="term" value="F:RNA binding"/>
    <property type="evidence" value="ECO:0007669"/>
    <property type="project" value="UniProtKB-UniRule"/>
</dbReference>
<dbReference type="GO" id="GO:0003743">
    <property type="term" value="F:translation initiation factor activity"/>
    <property type="evidence" value="ECO:0007669"/>
    <property type="project" value="UniProtKB-UniRule"/>
</dbReference>
<dbReference type="GO" id="GO:0001732">
    <property type="term" value="P:formation of cytoplasmic translation initiation complex"/>
    <property type="evidence" value="ECO:0007669"/>
    <property type="project" value="UniProtKB-UniRule"/>
</dbReference>
<dbReference type="CDD" id="cd12408">
    <property type="entry name" value="RRM_eIF3G_like"/>
    <property type="match status" value="1"/>
</dbReference>
<dbReference type="Gene3D" id="3.30.70.330">
    <property type="match status" value="1"/>
</dbReference>
<dbReference type="HAMAP" id="MF_03006">
    <property type="entry name" value="eIF3g"/>
    <property type="match status" value="1"/>
</dbReference>
<dbReference type="InterPro" id="IPR017334">
    <property type="entry name" value="eIF3_g"/>
</dbReference>
<dbReference type="InterPro" id="IPR024675">
    <property type="entry name" value="eIF3g_N"/>
</dbReference>
<dbReference type="InterPro" id="IPR034240">
    <property type="entry name" value="eIF3G_RRM"/>
</dbReference>
<dbReference type="InterPro" id="IPR012677">
    <property type="entry name" value="Nucleotide-bd_a/b_plait_sf"/>
</dbReference>
<dbReference type="InterPro" id="IPR035979">
    <property type="entry name" value="RBD_domain_sf"/>
</dbReference>
<dbReference type="InterPro" id="IPR000504">
    <property type="entry name" value="RRM_dom"/>
</dbReference>
<dbReference type="PANTHER" id="PTHR10352">
    <property type="entry name" value="EUKARYOTIC TRANSLATION INITIATION FACTOR 3 SUBUNIT G"/>
    <property type="match status" value="1"/>
</dbReference>
<dbReference type="Pfam" id="PF12353">
    <property type="entry name" value="eIF3g"/>
    <property type="match status" value="1"/>
</dbReference>
<dbReference type="Pfam" id="PF00076">
    <property type="entry name" value="RRM_1"/>
    <property type="match status" value="1"/>
</dbReference>
<dbReference type="PIRSF" id="PIRSF037949">
    <property type="entry name" value="Transl_init_eIF-3_RNA-bind"/>
    <property type="match status" value="1"/>
</dbReference>
<dbReference type="SMART" id="SM00360">
    <property type="entry name" value="RRM"/>
    <property type="match status" value="1"/>
</dbReference>
<dbReference type="SUPFAM" id="SSF54928">
    <property type="entry name" value="RNA-binding domain, RBD"/>
    <property type="match status" value="1"/>
</dbReference>
<dbReference type="PROSITE" id="PS50102">
    <property type="entry name" value="RRM"/>
    <property type="match status" value="1"/>
</dbReference>
<name>EIF3G_DICDI</name>
<organism>
    <name type="scientific">Dictyostelium discoideum</name>
    <name type="common">Social amoeba</name>
    <dbReference type="NCBI Taxonomy" id="44689"/>
    <lineage>
        <taxon>Eukaryota</taxon>
        <taxon>Amoebozoa</taxon>
        <taxon>Evosea</taxon>
        <taxon>Eumycetozoa</taxon>
        <taxon>Dictyostelia</taxon>
        <taxon>Dictyosteliales</taxon>
        <taxon>Dictyosteliaceae</taxon>
        <taxon>Dictyostelium</taxon>
    </lineage>
</organism>
<proteinExistence type="inferred from homology"/>
<keyword id="KW-0963">Cytoplasm</keyword>
<keyword id="KW-0396">Initiation factor</keyword>
<keyword id="KW-0648">Protein biosynthesis</keyword>
<keyword id="KW-1185">Reference proteome</keyword>
<keyword id="KW-0694">RNA-binding</keyword>
<sequence>MTSTNIDNRVPIEKTIEVIVKNDKGEEVKVIKRYQEYQITVKRNRKVDERKKWKKFGECDNKTGLENTAYGDEQFLVLTRGAEVKEEEKDVVKCRICKKNHFTTKCPYKDALELTTQPQKSEKEEKPISNKYIAPNLRGGYTGSAPSGSDVPSIMVSNLSQNATEKDLYELFGQFGPVSRVSIPKSMEGSSKGFAYVTYNHLDSAEKALKQLNGHRYDYLVLSLEFAKKKSLN</sequence>